<comment type="function">
    <text>May be involved in transcriptional regulation.</text>
</comment>
<comment type="interaction">
    <interactant intactId="EBI-10322527">
        <id>Q9UJW8</id>
    </interactant>
    <interactant intactId="EBI-2125614">
        <id>Q9BVG8</id>
        <label>KIFC3</label>
    </interactant>
    <organismsDiffer>false</organismsDiffer>
    <experiments>3</experiments>
</comment>
<comment type="interaction">
    <interactant intactId="EBI-10322527">
        <id>Q9UJW8</id>
    </interactant>
    <interactant intactId="EBI-10172290">
        <id>P60409</id>
        <label>KRTAP10-7</label>
    </interactant>
    <organismsDiffer>false</organismsDiffer>
    <experiments>3</experiments>
</comment>
<comment type="interaction">
    <interactant intactId="EBI-10322527">
        <id>Q9UJW8</id>
    </interactant>
    <interactant intactId="EBI-928842">
        <id>Q9GZM8</id>
        <label>NDEL1</label>
    </interactant>
    <organismsDiffer>false</organismsDiffer>
    <experiments>4</experiments>
</comment>
<comment type="interaction">
    <interactant intactId="EBI-12055755">
        <id>Q9UJW8-4</id>
    </interactant>
    <interactant intactId="EBI-3866279">
        <id>Q9BWT7</id>
        <label>CARD10</label>
    </interactant>
    <organismsDiffer>false</organismsDiffer>
    <experiments>3</experiments>
</comment>
<comment type="interaction">
    <interactant intactId="EBI-12055755">
        <id>Q9UJW8-4</id>
    </interactant>
    <interactant intactId="EBI-10292696">
        <id>Q96Q77</id>
        <label>CIB3</label>
    </interactant>
    <organismsDiffer>false</organismsDiffer>
    <experiments>3</experiments>
</comment>
<comment type="interaction">
    <interactant intactId="EBI-12055755">
        <id>Q9UJW8-4</id>
    </interactant>
    <interactant intactId="EBI-10976677">
        <id>G5E9A7</id>
        <label>DMWD</label>
    </interactant>
    <organismsDiffer>false</organismsDiffer>
    <experiments>3</experiments>
</comment>
<comment type="interaction">
    <interactant intactId="EBI-12055755">
        <id>Q9UJW8-4</id>
    </interactant>
    <interactant intactId="EBI-747754">
        <id>P28799</id>
        <label>GRN</label>
    </interactant>
    <organismsDiffer>false</organismsDiffer>
    <experiments>3</experiments>
</comment>
<comment type="interaction">
    <interactant intactId="EBI-12055755">
        <id>Q9UJW8-4</id>
    </interactant>
    <interactant intactId="EBI-25860013">
        <id>P28799-2</id>
        <label>GRN</label>
    </interactant>
    <organismsDiffer>false</organismsDiffer>
    <experiments>3</experiments>
</comment>
<comment type="interaction">
    <interactant intactId="EBI-12055755">
        <id>Q9UJW8-4</id>
    </interactant>
    <interactant intactId="EBI-466029">
        <id>P42858</id>
        <label>HTT</label>
    </interactant>
    <organismsDiffer>false</organismsDiffer>
    <experiments>9</experiments>
</comment>
<comment type="interaction">
    <interactant intactId="EBI-12055755">
        <id>Q9UJW8-4</id>
    </interactant>
    <interactant intactId="EBI-10975473">
        <id>O60333-2</id>
        <label>KIF1B</label>
    </interactant>
    <organismsDiffer>false</organismsDiffer>
    <experiments>3</experiments>
</comment>
<comment type="interaction">
    <interactant intactId="EBI-12055755">
        <id>Q9UJW8-4</id>
    </interactant>
    <interactant intactId="EBI-14069005">
        <id>Q9BVG8-5</id>
        <label>KIFC3</label>
    </interactant>
    <organismsDiffer>false</organismsDiffer>
    <experiments>3</experiments>
</comment>
<comment type="interaction">
    <interactant intactId="EBI-12055755">
        <id>Q9UJW8-4</id>
    </interactant>
    <interactant intactId="EBI-10178578">
        <id>I6L9F6</id>
        <label>NEFL</label>
    </interactant>
    <organismsDiffer>false</organismsDiffer>
    <experiments>3</experiments>
</comment>
<comment type="interaction">
    <interactant intactId="EBI-12055755">
        <id>Q9UJW8-4</id>
    </interactant>
    <interactant intactId="EBI-475646">
        <id>P07196</id>
        <label>NEFL</label>
    </interactant>
    <organismsDiffer>false</organismsDiffer>
    <experiments>3</experiments>
</comment>
<comment type="interaction">
    <interactant intactId="EBI-12055755">
        <id>Q9UJW8-4</id>
    </interactant>
    <interactant intactId="EBI-988601">
        <id>O43933</id>
        <label>PEX1</label>
    </interactant>
    <organismsDiffer>false</organismsDiffer>
    <experiments>3</experiments>
</comment>
<comment type="interaction">
    <interactant intactId="EBI-12055755">
        <id>Q9UJW8-4</id>
    </interactant>
    <interactant intactId="EBI-749195">
        <id>P60891</id>
        <label>PRPS1</label>
    </interactant>
    <organismsDiffer>false</organismsDiffer>
    <experiments>3</experiments>
</comment>
<comment type="interaction">
    <interactant intactId="EBI-12055755">
        <id>Q9UJW8-4</id>
    </interactant>
    <interactant intactId="EBI-396669">
        <id>Q9Y3C5</id>
        <label>RNF11</label>
    </interactant>
    <organismsDiffer>false</organismsDiffer>
    <experiments>3</experiments>
</comment>
<comment type="interaction">
    <interactant intactId="EBI-12055755">
        <id>Q9UJW8-4</id>
    </interactant>
    <interactant intactId="EBI-5235340">
        <id>Q7Z699</id>
        <label>SPRED1</label>
    </interactant>
    <organismsDiffer>false</organismsDiffer>
    <experiments>3</experiments>
</comment>
<comment type="interaction">
    <interactant intactId="EBI-12055755">
        <id>Q9UJW8-4</id>
    </interactant>
    <interactant intactId="EBI-720609">
        <id>O76024</id>
        <label>WFS1</label>
    </interactant>
    <organismsDiffer>false</organismsDiffer>
    <experiments>3</experiments>
</comment>
<comment type="subcellular location">
    <subcellularLocation>
        <location evidence="9">Nucleus</location>
    </subcellularLocation>
</comment>
<comment type="alternative products">
    <event type="alternative splicing"/>
    <isoform>
        <id>Q9UJW8-1</id>
        <name>1</name>
        <sequence type="displayed"/>
    </isoform>
    <isoform>
        <id>Q9UJW8-2</id>
        <name>2</name>
        <sequence type="described" ref="VSP_056706"/>
    </isoform>
    <isoform>
        <id>Q9UJW8-3</id>
        <name>3</name>
        <sequence type="described" ref="VSP_056707"/>
    </isoform>
    <isoform>
        <id>Q9UJW8-4</id>
        <name>4</name>
        <sequence type="described" ref="VSP_056705"/>
    </isoform>
</comment>
<comment type="similarity">
    <text evidence="9">Belongs to the krueppel C2H2-type zinc-finger protein family.</text>
</comment>
<evidence type="ECO:0000255" key="1">
    <source>
        <dbReference type="PROSITE-ProRule" id="PRU00042"/>
    </source>
</evidence>
<evidence type="ECO:0000255" key="2">
    <source>
        <dbReference type="PROSITE-ProRule" id="PRU00119"/>
    </source>
</evidence>
<evidence type="ECO:0000269" key="3">
    <source>
    </source>
</evidence>
<evidence type="ECO:0000269" key="4">
    <source>
    </source>
</evidence>
<evidence type="ECO:0000269" key="5">
    <source>
    </source>
</evidence>
<evidence type="ECO:0000269" key="6">
    <source ref="4"/>
</evidence>
<evidence type="ECO:0000303" key="7">
    <source>
    </source>
</evidence>
<evidence type="ECO:0000303" key="8">
    <source>
    </source>
</evidence>
<evidence type="ECO:0000305" key="9"/>
<evidence type="ECO:0007744" key="10">
    <source>
    </source>
</evidence>
<evidence type="ECO:0007744" key="11">
    <source>
    </source>
</evidence>
<evidence type="ECO:0007744" key="12">
    <source>
    </source>
</evidence>
<dbReference type="EMBL" id="AF192913">
    <property type="protein sequence ID" value="AAF07950.1"/>
    <property type="molecule type" value="mRNA"/>
</dbReference>
<dbReference type="EMBL" id="AK122688">
    <property type="protein sequence ID" value="BAG53668.1"/>
    <property type="molecule type" value="mRNA"/>
</dbReference>
<dbReference type="EMBL" id="AK315193">
    <property type="protein sequence ID" value="BAG37633.1"/>
    <property type="molecule type" value="mRNA"/>
</dbReference>
<dbReference type="EMBL" id="AC069278">
    <property type="protein sequence ID" value="AAF71790.1"/>
    <property type="molecule type" value="Genomic_DNA"/>
</dbReference>
<dbReference type="EMBL" id="AC245748">
    <property type="status" value="NOT_ANNOTATED_CDS"/>
    <property type="molecule type" value="Genomic_DNA"/>
</dbReference>
<dbReference type="EMBL" id="CH471126">
    <property type="protein sequence ID" value="EAW57275.1"/>
    <property type="molecule type" value="Genomic_DNA"/>
</dbReference>
<dbReference type="EMBL" id="CH471126">
    <property type="protein sequence ID" value="EAW57276.1"/>
    <property type="molecule type" value="Genomic_DNA"/>
</dbReference>
<dbReference type="EMBL" id="CH471126">
    <property type="protein sequence ID" value="EAW57279.1"/>
    <property type="molecule type" value="Genomic_DNA"/>
</dbReference>
<dbReference type="EMBL" id="BC033642">
    <property type="protein sequence ID" value="AAH33642.1"/>
    <property type="molecule type" value="mRNA"/>
</dbReference>
<dbReference type="EMBL" id="BC113015">
    <property type="protein sequence ID" value="AAI13016.1"/>
    <property type="molecule type" value="mRNA"/>
</dbReference>
<dbReference type="CCDS" id="CCDS12639.1">
    <molecule id="Q9UJW8-1"/>
</dbReference>
<dbReference type="CCDS" id="CCDS62707.1">
    <molecule id="Q9UJW8-2"/>
</dbReference>
<dbReference type="CCDS" id="CCDS62708.1">
    <molecule id="Q9UJW8-3"/>
</dbReference>
<dbReference type="RefSeq" id="NP_001265437.2">
    <molecule id="Q9UJW8-3"/>
    <property type="nucleotide sequence ID" value="NM_001278508.4"/>
</dbReference>
<dbReference type="RefSeq" id="NP_001265438.2">
    <molecule id="Q9UJW8-2"/>
    <property type="nucleotide sequence ID" value="NM_001278509.3"/>
</dbReference>
<dbReference type="RefSeq" id="NP_001275688.2">
    <molecule id="Q9UJW8-4"/>
    <property type="nucleotide sequence ID" value="NM_001288759.4"/>
</dbReference>
<dbReference type="RefSeq" id="NP_001275689.1">
    <property type="nucleotide sequence ID" value="NM_001288760.2"/>
</dbReference>
<dbReference type="RefSeq" id="NP_001275690.1">
    <property type="nucleotide sequence ID" value="NM_001288761.2"/>
</dbReference>
<dbReference type="RefSeq" id="NP_001275691.1">
    <property type="nucleotide sequence ID" value="NM_001288762.2"/>
</dbReference>
<dbReference type="RefSeq" id="NP_001278562.1">
    <molecule id="Q9UJW8-2"/>
    <property type="nucleotide sequence ID" value="NM_001291633.2"/>
</dbReference>
<dbReference type="RefSeq" id="NP_037388.3">
    <molecule id="Q9UJW8-1"/>
    <property type="nucleotide sequence ID" value="NM_013256.7"/>
</dbReference>
<dbReference type="SMR" id="Q9UJW8"/>
<dbReference type="BioGRID" id="113521">
    <property type="interactions" value="9"/>
</dbReference>
<dbReference type="FunCoup" id="Q9UJW8">
    <property type="interactions" value="11"/>
</dbReference>
<dbReference type="IntAct" id="Q9UJW8">
    <property type="interactions" value="27"/>
</dbReference>
<dbReference type="STRING" id="9606.ENSP00000221327"/>
<dbReference type="GlyGen" id="Q9UJW8">
    <property type="glycosylation" value="1 site, 1 O-linked glycan (1 site)"/>
</dbReference>
<dbReference type="iPTMnet" id="Q9UJW8"/>
<dbReference type="PhosphoSitePlus" id="Q9UJW8"/>
<dbReference type="BioMuta" id="ZNF180"/>
<dbReference type="DMDM" id="134044257"/>
<dbReference type="jPOST" id="Q9UJW8"/>
<dbReference type="MassIVE" id="Q9UJW8"/>
<dbReference type="PaxDb" id="9606-ENSP00000221327"/>
<dbReference type="PeptideAtlas" id="Q9UJW8"/>
<dbReference type="ProteomicsDB" id="84675">
    <molecule id="Q9UJW8-1"/>
</dbReference>
<dbReference type="Antibodypedia" id="31184">
    <property type="antibodies" value="87 antibodies from 19 providers"/>
</dbReference>
<dbReference type="DNASU" id="7733"/>
<dbReference type="Ensembl" id="ENST00000221327.8">
    <molecule id="Q9UJW8-1"/>
    <property type="protein sequence ID" value="ENSP00000221327.3"/>
    <property type="gene ID" value="ENSG00000167384.11"/>
</dbReference>
<dbReference type="Ensembl" id="ENST00000391956.8">
    <molecule id="Q9UJW8-3"/>
    <property type="protein sequence ID" value="ENSP00000375818.3"/>
    <property type="gene ID" value="ENSG00000167384.11"/>
</dbReference>
<dbReference type="Ensembl" id="ENST00000592529.6">
    <molecule id="Q9UJW8-2"/>
    <property type="protein sequence ID" value="ENSP00000468021.1"/>
    <property type="gene ID" value="ENSG00000167384.11"/>
</dbReference>
<dbReference type="GeneID" id="7733"/>
<dbReference type="KEGG" id="hsa:7733"/>
<dbReference type="MANE-Select" id="ENST00000592529.6">
    <molecule id="Q9UJW8-2"/>
    <property type="protein sequence ID" value="ENSP00000468021.1"/>
    <property type="RefSeq nucleotide sequence ID" value="NM_001278509.3"/>
    <property type="RefSeq protein sequence ID" value="NP_001265438.2"/>
</dbReference>
<dbReference type="UCSC" id="uc002ozf.6">
    <molecule id="Q9UJW8-1"/>
    <property type="organism name" value="human"/>
</dbReference>
<dbReference type="AGR" id="HGNC:12970"/>
<dbReference type="CTD" id="7733"/>
<dbReference type="DisGeNET" id="7733"/>
<dbReference type="GeneCards" id="ZNF180"/>
<dbReference type="HGNC" id="HGNC:12970">
    <property type="gene designation" value="ZNF180"/>
</dbReference>
<dbReference type="HPA" id="ENSG00000167384">
    <property type="expression patterns" value="Low tissue specificity"/>
</dbReference>
<dbReference type="MIM" id="606740">
    <property type="type" value="gene"/>
</dbReference>
<dbReference type="neXtProt" id="NX_Q9UJW8"/>
<dbReference type="OpenTargets" id="ENSG00000167384"/>
<dbReference type="PharmGKB" id="PA37552"/>
<dbReference type="VEuPathDB" id="HostDB:ENSG00000167384"/>
<dbReference type="eggNOG" id="KOG1721">
    <property type="taxonomic scope" value="Eukaryota"/>
</dbReference>
<dbReference type="GeneTree" id="ENSGT00940000162315"/>
<dbReference type="HOGENOM" id="CLU_002678_35_3_1"/>
<dbReference type="InParanoid" id="Q9UJW8"/>
<dbReference type="OMA" id="ISHERAC"/>
<dbReference type="OrthoDB" id="6591996at2759"/>
<dbReference type="PAN-GO" id="Q9UJW8">
    <property type="GO annotations" value="3 GO annotations based on evolutionary models"/>
</dbReference>
<dbReference type="PhylomeDB" id="Q9UJW8"/>
<dbReference type="TreeFam" id="TF350793"/>
<dbReference type="PathwayCommons" id="Q9UJW8"/>
<dbReference type="Reactome" id="R-HSA-212436">
    <property type="pathway name" value="Generic Transcription Pathway"/>
</dbReference>
<dbReference type="SignaLink" id="Q9UJW8"/>
<dbReference type="BioGRID-ORCS" id="7733">
    <property type="hits" value="6 hits in 1175 CRISPR screens"/>
</dbReference>
<dbReference type="ChiTaRS" id="ZNF180">
    <property type="organism name" value="human"/>
</dbReference>
<dbReference type="GenomeRNAi" id="7733"/>
<dbReference type="Pharos" id="Q9UJW8">
    <property type="development level" value="Tdark"/>
</dbReference>
<dbReference type="PRO" id="PR:Q9UJW8"/>
<dbReference type="Proteomes" id="UP000005640">
    <property type="component" value="Chromosome 19"/>
</dbReference>
<dbReference type="RNAct" id="Q9UJW8">
    <property type="molecule type" value="protein"/>
</dbReference>
<dbReference type="Bgee" id="ENSG00000167384">
    <property type="expression patterns" value="Expressed in endothelial cell and 135 other cell types or tissues"/>
</dbReference>
<dbReference type="ExpressionAtlas" id="Q9UJW8">
    <property type="expression patterns" value="baseline and differential"/>
</dbReference>
<dbReference type="GO" id="GO:0005634">
    <property type="term" value="C:nucleus"/>
    <property type="evidence" value="ECO:0000318"/>
    <property type="project" value="GO_Central"/>
</dbReference>
<dbReference type="GO" id="GO:0000981">
    <property type="term" value="F:DNA-binding transcription factor activity, RNA polymerase II-specific"/>
    <property type="evidence" value="ECO:0000318"/>
    <property type="project" value="GO_Central"/>
</dbReference>
<dbReference type="GO" id="GO:0000977">
    <property type="term" value="F:RNA polymerase II transcription regulatory region sequence-specific DNA binding"/>
    <property type="evidence" value="ECO:0000318"/>
    <property type="project" value="GO_Central"/>
</dbReference>
<dbReference type="GO" id="GO:0008270">
    <property type="term" value="F:zinc ion binding"/>
    <property type="evidence" value="ECO:0007669"/>
    <property type="project" value="UniProtKB-KW"/>
</dbReference>
<dbReference type="GO" id="GO:0006357">
    <property type="term" value="P:regulation of transcription by RNA polymerase II"/>
    <property type="evidence" value="ECO:0000318"/>
    <property type="project" value="GO_Central"/>
</dbReference>
<dbReference type="CDD" id="cd07765">
    <property type="entry name" value="KRAB_A-box"/>
    <property type="match status" value="1"/>
</dbReference>
<dbReference type="FunFam" id="3.30.160.60:FF:005075">
    <property type="match status" value="1"/>
</dbReference>
<dbReference type="FunFam" id="3.30.160.60:FF:000078">
    <property type="entry name" value="Zinc finger protein 180"/>
    <property type="match status" value="6"/>
</dbReference>
<dbReference type="FunFam" id="3.30.160.60:FF:000784">
    <property type="entry name" value="Zinc finger protein 180"/>
    <property type="match status" value="1"/>
</dbReference>
<dbReference type="FunFam" id="3.30.160.60:FF:001122">
    <property type="entry name" value="Zinc finger protein 180"/>
    <property type="match status" value="1"/>
</dbReference>
<dbReference type="FunFam" id="3.30.160.60:FF:002254">
    <property type="entry name" value="Zinc finger protein 540"/>
    <property type="match status" value="2"/>
</dbReference>
<dbReference type="FunFam" id="3.30.160.60:FF:000953">
    <property type="entry name" value="Zinc finger protein 691"/>
    <property type="match status" value="1"/>
</dbReference>
<dbReference type="Gene3D" id="6.10.140.140">
    <property type="match status" value="1"/>
</dbReference>
<dbReference type="Gene3D" id="3.30.160.60">
    <property type="entry name" value="Classic Zinc Finger"/>
    <property type="match status" value="12"/>
</dbReference>
<dbReference type="InterPro" id="IPR001909">
    <property type="entry name" value="KRAB"/>
</dbReference>
<dbReference type="InterPro" id="IPR036051">
    <property type="entry name" value="KRAB_dom_sf"/>
</dbReference>
<dbReference type="InterPro" id="IPR056436">
    <property type="entry name" value="Znf-C2H2_ZIC1-5/GLI1-3-like"/>
</dbReference>
<dbReference type="InterPro" id="IPR050758">
    <property type="entry name" value="Znf_C2H2-type"/>
</dbReference>
<dbReference type="InterPro" id="IPR036236">
    <property type="entry name" value="Znf_C2H2_sf"/>
</dbReference>
<dbReference type="InterPro" id="IPR013087">
    <property type="entry name" value="Znf_C2H2_type"/>
</dbReference>
<dbReference type="PANTHER" id="PTHR23234:SF10">
    <property type="entry name" value="RIKEN CDNA 6720489N17 GENE-RELATED"/>
    <property type="match status" value="1"/>
</dbReference>
<dbReference type="PANTHER" id="PTHR23234">
    <property type="entry name" value="ZNF44 PROTEIN"/>
    <property type="match status" value="1"/>
</dbReference>
<dbReference type="Pfam" id="PF01352">
    <property type="entry name" value="KRAB"/>
    <property type="match status" value="1"/>
</dbReference>
<dbReference type="Pfam" id="PF00096">
    <property type="entry name" value="zf-C2H2"/>
    <property type="match status" value="11"/>
</dbReference>
<dbReference type="Pfam" id="PF23561">
    <property type="entry name" value="zf-C2H2_15"/>
    <property type="match status" value="1"/>
</dbReference>
<dbReference type="SMART" id="SM00349">
    <property type="entry name" value="KRAB"/>
    <property type="match status" value="1"/>
</dbReference>
<dbReference type="SMART" id="SM00355">
    <property type="entry name" value="ZnF_C2H2"/>
    <property type="match status" value="12"/>
</dbReference>
<dbReference type="SUPFAM" id="SSF57667">
    <property type="entry name" value="beta-beta-alpha zinc fingers"/>
    <property type="match status" value="8"/>
</dbReference>
<dbReference type="SUPFAM" id="SSF109640">
    <property type="entry name" value="KRAB domain (Kruppel-associated box)"/>
    <property type="match status" value="1"/>
</dbReference>
<dbReference type="PROSITE" id="PS50805">
    <property type="entry name" value="KRAB"/>
    <property type="match status" value="1"/>
</dbReference>
<dbReference type="PROSITE" id="PS00028">
    <property type="entry name" value="ZINC_FINGER_C2H2_1"/>
    <property type="match status" value="12"/>
</dbReference>
<dbReference type="PROSITE" id="PS50157">
    <property type="entry name" value="ZINC_FINGER_C2H2_2"/>
    <property type="match status" value="12"/>
</dbReference>
<accession>Q9UJW8</accession>
<accession>A0A0A0MP75</accession>
<accession>B2RCN6</accession>
<accession>B3KV56</accession>
<accession>K7EQX9</accession>
<accession>Q58F03</accession>
<accession>Q9P1U2</accession>
<gene>
    <name type="primary">ZNF180</name>
</gene>
<protein>
    <recommendedName>
        <fullName>Zinc finger protein 180</fullName>
    </recommendedName>
    <alternativeName>
        <fullName>HHZ168</fullName>
    </alternativeName>
</protein>
<organism>
    <name type="scientific">Homo sapiens</name>
    <name type="common">Human</name>
    <dbReference type="NCBI Taxonomy" id="9606"/>
    <lineage>
        <taxon>Eukaryota</taxon>
        <taxon>Metazoa</taxon>
        <taxon>Chordata</taxon>
        <taxon>Craniata</taxon>
        <taxon>Vertebrata</taxon>
        <taxon>Euteleostomi</taxon>
        <taxon>Mammalia</taxon>
        <taxon>Eutheria</taxon>
        <taxon>Euarchontoglires</taxon>
        <taxon>Primates</taxon>
        <taxon>Haplorrhini</taxon>
        <taxon>Catarrhini</taxon>
        <taxon>Hominidae</taxon>
        <taxon>Homo</taxon>
    </lineage>
</organism>
<reference key="1">
    <citation type="journal article" date="2003" name="Genome Res.">
        <title>Differential expansion of zinc-finger transcription factor loci in homologous human and mouse gene clusters.</title>
        <authorList>
            <person name="Shannon M."/>
            <person name="Hamilton A.T."/>
            <person name="Gordon L."/>
            <person name="Branscomb E."/>
            <person name="Stubbs L."/>
        </authorList>
    </citation>
    <scope>NUCLEOTIDE SEQUENCE [MRNA] (ISOFORM 1)</scope>
</reference>
<reference key="2">
    <citation type="journal article" date="2004" name="Nat. Genet.">
        <title>Complete sequencing and characterization of 21,243 full-length human cDNAs.</title>
        <authorList>
            <person name="Ota T."/>
            <person name="Suzuki Y."/>
            <person name="Nishikawa T."/>
            <person name="Otsuki T."/>
            <person name="Sugiyama T."/>
            <person name="Irie R."/>
            <person name="Wakamatsu A."/>
            <person name="Hayashi K."/>
            <person name="Sato H."/>
            <person name="Nagai K."/>
            <person name="Kimura K."/>
            <person name="Makita H."/>
            <person name="Sekine M."/>
            <person name="Obayashi M."/>
            <person name="Nishi T."/>
            <person name="Shibahara T."/>
            <person name="Tanaka T."/>
            <person name="Ishii S."/>
            <person name="Yamamoto J."/>
            <person name="Saito K."/>
            <person name="Kawai Y."/>
            <person name="Isono Y."/>
            <person name="Nakamura Y."/>
            <person name="Nagahari K."/>
            <person name="Murakami K."/>
            <person name="Yasuda T."/>
            <person name="Iwayanagi T."/>
            <person name="Wagatsuma M."/>
            <person name="Shiratori A."/>
            <person name="Sudo H."/>
            <person name="Hosoiri T."/>
            <person name="Kaku Y."/>
            <person name="Kodaira H."/>
            <person name="Kondo H."/>
            <person name="Sugawara M."/>
            <person name="Takahashi M."/>
            <person name="Kanda K."/>
            <person name="Yokoi T."/>
            <person name="Furuya T."/>
            <person name="Kikkawa E."/>
            <person name="Omura Y."/>
            <person name="Abe K."/>
            <person name="Kamihara K."/>
            <person name="Katsuta N."/>
            <person name="Sato K."/>
            <person name="Tanikawa M."/>
            <person name="Yamazaki M."/>
            <person name="Ninomiya K."/>
            <person name="Ishibashi T."/>
            <person name="Yamashita H."/>
            <person name="Murakawa K."/>
            <person name="Fujimori K."/>
            <person name="Tanai H."/>
            <person name="Kimata M."/>
            <person name="Watanabe M."/>
            <person name="Hiraoka S."/>
            <person name="Chiba Y."/>
            <person name="Ishida S."/>
            <person name="Ono Y."/>
            <person name="Takiguchi S."/>
            <person name="Watanabe S."/>
            <person name="Yosida M."/>
            <person name="Hotuta T."/>
            <person name="Kusano J."/>
            <person name="Kanehori K."/>
            <person name="Takahashi-Fujii A."/>
            <person name="Hara H."/>
            <person name="Tanase T.-O."/>
            <person name="Nomura Y."/>
            <person name="Togiya S."/>
            <person name="Komai F."/>
            <person name="Hara R."/>
            <person name="Takeuchi K."/>
            <person name="Arita M."/>
            <person name="Imose N."/>
            <person name="Musashino K."/>
            <person name="Yuuki H."/>
            <person name="Oshima A."/>
            <person name="Sasaki N."/>
            <person name="Aotsuka S."/>
            <person name="Yoshikawa Y."/>
            <person name="Matsunawa H."/>
            <person name="Ichihara T."/>
            <person name="Shiohata N."/>
            <person name="Sano S."/>
            <person name="Moriya S."/>
            <person name="Momiyama H."/>
            <person name="Satoh N."/>
            <person name="Takami S."/>
            <person name="Terashima Y."/>
            <person name="Suzuki O."/>
            <person name="Nakagawa S."/>
            <person name="Senoh A."/>
            <person name="Mizoguchi H."/>
            <person name="Goto Y."/>
            <person name="Shimizu F."/>
            <person name="Wakebe H."/>
            <person name="Hishigaki H."/>
            <person name="Watanabe T."/>
            <person name="Sugiyama A."/>
            <person name="Takemoto M."/>
            <person name="Kawakami B."/>
            <person name="Yamazaki M."/>
            <person name="Watanabe K."/>
            <person name="Kumagai A."/>
            <person name="Itakura S."/>
            <person name="Fukuzumi Y."/>
            <person name="Fujimori Y."/>
            <person name="Komiyama M."/>
            <person name="Tashiro H."/>
            <person name="Tanigami A."/>
            <person name="Fujiwara T."/>
            <person name="Ono T."/>
            <person name="Yamada K."/>
            <person name="Fujii Y."/>
            <person name="Ozaki K."/>
            <person name="Hirao M."/>
            <person name="Ohmori Y."/>
            <person name="Kawabata A."/>
            <person name="Hikiji T."/>
            <person name="Kobatake N."/>
            <person name="Inagaki H."/>
            <person name="Ikema Y."/>
            <person name="Okamoto S."/>
            <person name="Okitani R."/>
            <person name="Kawakami T."/>
            <person name="Noguchi S."/>
            <person name="Itoh T."/>
            <person name="Shigeta K."/>
            <person name="Senba T."/>
            <person name="Matsumura K."/>
            <person name="Nakajima Y."/>
            <person name="Mizuno T."/>
            <person name="Morinaga M."/>
            <person name="Sasaki M."/>
            <person name="Togashi T."/>
            <person name="Oyama M."/>
            <person name="Hata H."/>
            <person name="Watanabe M."/>
            <person name="Komatsu T."/>
            <person name="Mizushima-Sugano J."/>
            <person name="Satoh T."/>
            <person name="Shirai Y."/>
            <person name="Takahashi Y."/>
            <person name="Nakagawa K."/>
            <person name="Okumura K."/>
            <person name="Nagase T."/>
            <person name="Nomura N."/>
            <person name="Kikuchi H."/>
            <person name="Masuho Y."/>
            <person name="Yamashita R."/>
            <person name="Nakai K."/>
            <person name="Yada T."/>
            <person name="Nakamura Y."/>
            <person name="Ohara O."/>
            <person name="Isogai T."/>
            <person name="Sugano S."/>
        </authorList>
    </citation>
    <scope>NUCLEOTIDE SEQUENCE [LARGE SCALE MRNA] (ISOFORMS 1 AND 3)</scope>
    <scope>VARIANTS ALA-41; TRP-89 AND CYS-272</scope>
    <source>
        <tissue>Amygdala</tissue>
        <tissue>Spleen</tissue>
    </source>
</reference>
<reference key="3">
    <citation type="journal article" date="2004" name="Nature">
        <title>The DNA sequence and biology of human chromosome 19.</title>
        <authorList>
            <person name="Grimwood J."/>
            <person name="Gordon L.A."/>
            <person name="Olsen A.S."/>
            <person name="Terry A."/>
            <person name="Schmutz J."/>
            <person name="Lamerdin J.E."/>
            <person name="Hellsten U."/>
            <person name="Goodstein D."/>
            <person name="Couronne O."/>
            <person name="Tran-Gyamfi M."/>
            <person name="Aerts A."/>
            <person name="Altherr M."/>
            <person name="Ashworth L."/>
            <person name="Bajorek E."/>
            <person name="Black S."/>
            <person name="Branscomb E."/>
            <person name="Caenepeel S."/>
            <person name="Carrano A.V."/>
            <person name="Caoile C."/>
            <person name="Chan Y.M."/>
            <person name="Christensen M."/>
            <person name="Cleland C.A."/>
            <person name="Copeland A."/>
            <person name="Dalin E."/>
            <person name="Dehal P."/>
            <person name="Denys M."/>
            <person name="Detter J.C."/>
            <person name="Escobar J."/>
            <person name="Flowers D."/>
            <person name="Fotopulos D."/>
            <person name="Garcia C."/>
            <person name="Georgescu A.M."/>
            <person name="Glavina T."/>
            <person name="Gomez M."/>
            <person name="Gonzales E."/>
            <person name="Groza M."/>
            <person name="Hammon N."/>
            <person name="Hawkins T."/>
            <person name="Haydu L."/>
            <person name="Ho I."/>
            <person name="Huang W."/>
            <person name="Israni S."/>
            <person name="Jett J."/>
            <person name="Kadner K."/>
            <person name="Kimball H."/>
            <person name="Kobayashi A."/>
            <person name="Larionov V."/>
            <person name="Leem S.-H."/>
            <person name="Lopez F."/>
            <person name="Lou Y."/>
            <person name="Lowry S."/>
            <person name="Malfatti S."/>
            <person name="Martinez D."/>
            <person name="McCready P.M."/>
            <person name="Medina C."/>
            <person name="Morgan J."/>
            <person name="Nelson K."/>
            <person name="Nolan M."/>
            <person name="Ovcharenko I."/>
            <person name="Pitluck S."/>
            <person name="Pollard M."/>
            <person name="Popkie A.P."/>
            <person name="Predki P."/>
            <person name="Quan G."/>
            <person name="Ramirez L."/>
            <person name="Rash S."/>
            <person name="Retterer J."/>
            <person name="Rodriguez A."/>
            <person name="Rogers S."/>
            <person name="Salamov A."/>
            <person name="Salazar A."/>
            <person name="She X."/>
            <person name="Smith D."/>
            <person name="Slezak T."/>
            <person name="Solovyev V."/>
            <person name="Thayer N."/>
            <person name="Tice H."/>
            <person name="Tsai M."/>
            <person name="Ustaszewska A."/>
            <person name="Vo N."/>
            <person name="Wagner M."/>
            <person name="Wheeler J."/>
            <person name="Wu K."/>
            <person name="Xie G."/>
            <person name="Yang J."/>
            <person name="Dubchak I."/>
            <person name="Furey T.S."/>
            <person name="DeJong P."/>
            <person name="Dickson M."/>
            <person name="Gordon D."/>
            <person name="Eichler E.E."/>
            <person name="Pennacchio L.A."/>
            <person name="Richardson P."/>
            <person name="Stubbs L."/>
            <person name="Rokhsar D.S."/>
            <person name="Myers R.M."/>
            <person name="Rubin E.M."/>
            <person name="Lucas S.M."/>
        </authorList>
    </citation>
    <scope>NUCLEOTIDE SEQUENCE [LARGE SCALE GENOMIC DNA]</scope>
    <scope>VARIANTS ALA-41; TRP-89 AND CYS-272</scope>
</reference>
<reference key="4">
    <citation type="submission" date="2005-07" db="EMBL/GenBank/DDBJ databases">
        <authorList>
            <person name="Mural R.J."/>
            <person name="Istrail S."/>
            <person name="Sutton G.G."/>
            <person name="Florea L."/>
            <person name="Halpern A.L."/>
            <person name="Mobarry C.M."/>
            <person name="Lippert R."/>
            <person name="Walenz B."/>
            <person name="Shatkay H."/>
            <person name="Dew I."/>
            <person name="Miller J.R."/>
            <person name="Flanigan M.J."/>
            <person name="Edwards N.J."/>
            <person name="Bolanos R."/>
            <person name="Fasulo D."/>
            <person name="Halldorsson B.V."/>
            <person name="Hannenhalli S."/>
            <person name="Turner R."/>
            <person name="Yooseph S."/>
            <person name="Lu F."/>
            <person name="Nusskern D.R."/>
            <person name="Shue B.C."/>
            <person name="Zheng X.H."/>
            <person name="Zhong F."/>
            <person name="Delcher A.L."/>
            <person name="Huson D.H."/>
            <person name="Kravitz S.A."/>
            <person name="Mouchard L."/>
            <person name="Reinert K."/>
            <person name="Remington K.A."/>
            <person name="Clark A.G."/>
            <person name="Waterman M.S."/>
            <person name="Eichler E.E."/>
            <person name="Adams M.D."/>
            <person name="Hunkapiller M.W."/>
            <person name="Myers E.W."/>
            <person name="Venter J.C."/>
        </authorList>
    </citation>
    <scope>NUCLEOTIDE SEQUENCE [LARGE SCALE GENOMIC DNA]</scope>
    <scope>VARIANTS ALA-41; TRP-89 AND CYS-272</scope>
</reference>
<reference key="5">
    <citation type="journal article" date="2004" name="Genome Res.">
        <title>The status, quality, and expansion of the NIH full-length cDNA project: the Mammalian Gene Collection (MGC).</title>
        <authorList>
            <consortium name="The MGC Project Team"/>
        </authorList>
    </citation>
    <scope>NUCLEOTIDE SEQUENCE [LARGE SCALE MRNA] (ISOFORM 4)</scope>
    <scope>VARIANTS ALA-41; TRP-89 AND CYS-272</scope>
    <source>
        <tissue>Skin</tissue>
    </source>
</reference>
<reference key="6">
    <citation type="journal article" date="2009" name="Sci. Signal.">
        <title>Quantitative phosphoproteomic analysis of T cell receptor signaling reveals system-wide modulation of protein-protein interactions.</title>
        <authorList>
            <person name="Mayya V."/>
            <person name="Lundgren D.H."/>
            <person name="Hwang S.-I."/>
            <person name="Rezaul K."/>
            <person name="Wu L."/>
            <person name="Eng J.K."/>
            <person name="Rodionov V."/>
            <person name="Han D.K."/>
        </authorList>
    </citation>
    <scope>IDENTIFICATION BY MASS SPECTROMETRY [LARGE SCALE ANALYSIS]</scope>
    <source>
        <tissue>Leukemic T-cell</tissue>
    </source>
</reference>
<reference key="7">
    <citation type="journal article" date="2014" name="Nat. Struct. Mol. Biol.">
        <title>Uncovering global SUMOylation signaling networks in a site-specific manner.</title>
        <authorList>
            <person name="Hendriks I.A."/>
            <person name="D'Souza R.C."/>
            <person name="Yang B."/>
            <person name="Verlaan-de Vries M."/>
            <person name="Mann M."/>
            <person name="Vertegaal A.C."/>
        </authorList>
    </citation>
    <scope>SUMOYLATION [LARGE SCALE ANALYSIS] AT LYS-138</scope>
    <scope>IDENTIFICATION BY MASS SPECTROMETRY [LARGE SCALE ANALYSIS]</scope>
</reference>
<reference key="8">
    <citation type="journal article" date="2015" name="Cell Rep.">
        <title>SUMO-2 orchestrates chromatin modifiers in response to DNA damage.</title>
        <authorList>
            <person name="Hendriks I.A."/>
            <person name="Treffers L.W."/>
            <person name="Verlaan-de Vries M."/>
            <person name="Olsen J.V."/>
            <person name="Vertegaal A.C."/>
        </authorList>
    </citation>
    <scope>SUMOYLATION [LARGE SCALE ANALYSIS] AT LYS-138</scope>
    <scope>IDENTIFICATION BY MASS SPECTROMETRY [LARGE SCALE ANALYSIS]</scope>
</reference>
<reference key="9">
    <citation type="journal article" date="2017" name="Nat. Struct. Mol. Biol.">
        <title>Site-specific mapping of the human SUMO proteome reveals co-modification with phosphorylation.</title>
        <authorList>
            <person name="Hendriks I.A."/>
            <person name="Lyon D."/>
            <person name="Young C."/>
            <person name="Jensen L.J."/>
            <person name="Vertegaal A.C."/>
            <person name="Nielsen M.L."/>
        </authorList>
    </citation>
    <scope>SUMOYLATION [LARGE SCALE ANALYSIS] AT LYS-138; LYS-159; LYS-168; LYS-191; LYS-198; LYS-226; LYS-304; LYS-313 AND LYS-330</scope>
    <scope>IDENTIFICATION BY MASS SPECTROMETRY [LARGE SCALE ANALYSIS]</scope>
</reference>
<keyword id="KW-0025">Alternative splicing</keyword>
<keyword id="KW-0238">DNA-binding</keyword>
<keyword id="KW-1017">Isopeptide bond</keyword>
<keyword id="KW-0479">Metal-binding</keyword>
<keyword id="KW-0539">Nucleus</keyword>
<keyword id="KW-1267">Proteomics identification</keyword>
<keyword id="KW-1185">Reference proteome</keyword>
<keyword id="KW-0677">Repeat</keyword>
<keyword id="KW-0804">Transcription</keyword>
<keyword id="KW-0805">Transcription regulation</keyword>
<keyword id="KW-0832">Ubl conjugation</keyword>
<keyword id="KW-0862">Zinc</keyword>
<keyword id="KW-0863">Zinc-finger</keyword>
<name>ZN180_HUMAN</name>
<feature type="chain" id="PRO_0000047442" description="Zinc finger protein 180">
    <location>
        <begin position="1"/>
        <end position="692"/>
    </location>
</feature>
<feature type="domain" description="KRAB" evidence="2">
    <location>
        <begin position="72"/>
        <end position="145"/>
    </location>
</feature>
<feature type="zinc finger region" description="C2H2-type 1" evidence="1">
    <location>
        <begin position="353"/>
        <end position="375"/>
    </location>
</feature>
<feature type="zinc finger region" description="C2H2-type 2" evidence="1">
    <location>
        <begin position="381"/>
        <end position="403"/>
    </location>
</feature>
<feature type="zinc finger region" description="C2H2-type 3" evidence="1">
    <location>
        <begin position="409"/>
        <end position="431"/>
    </location>
</feature>
<feature type="zinc finger region" description="C2H2-type 4" evidence="1">
    <location>
        <begin position="437"/>
        <end position="459"/>
    </location>
</feature>
<feature type="zinc finger region" description="C2H2-type 5" evidence="1">
    <location>
        <begin position="465"/>
        <end position="487"/>
    </location>
</feature>
<feature type="zinc finger region" description="C2H2-type 6" evidence="1">
    <location>
        <begin position="493"/>
        <end position="515"/>
    </location>
</feature>
<feature type="zinc finger region" description="C2H2-type 7" evidence="1">
    <location>
        <begin position="521"/>
        <end position="543"/>
    </location>
</feature>
<feature type="zinc finger region" description="C2H2-type 8" evidence="1">
    <location>
        <begin position="549"/>
        <end position="571"/>
    </location>
</feature>
<feature type="zinc finger region" description="C2H2-type 9" evidence="1">
    <location>
        <begin position="577"/>
        <end position="599"/>
    </location>
</feature>
<feature type="zinc finger region" description="C2H2-type 10" evidence="1">
    <location>
        <begin position="605"/>
        <end position="627"/>
    </location>
</feature>
<feature type="zinc finger region" description="C2H2-type 11" evidence="1">
    <location>
        <begin position="633"/>
        <end position="655"/>
    </location>
</feature>
<feature type="zinc finger region" description="C2H2-type 12" evidence="1">
    <location>
        <begin position="661"/>
        <end position="683"/>
    </location>
</feature>
<feature type="cross-link" description="Glycyl lysine isopeptide (Lys-Gly) (interchain with G-Cter in SUMO2)" evidence="10 11 12">
    <location>
        <position position="138"/>
    </location>
</feature>
<feature type="cross-link" description="Glycyl lysine isopeptide (Lys-Gly) (interchain with G-Cter in SUMO2)" evidence="12">
    <location>
        <position position="159"/>
    </location>
</feature>
<feature type="cross-link" description="Glycyl lysine isopeptide (Lys-Gly) (interchain with G-Cter in SUMO2)" evidence="12">
    <location>
        <position position="168"/>
    </location>
</feature>
<feature type="cross-link" description="Glycyl lysine isopeptide (Lys-Gly) (interchain with G-Cter in SUMO2)" evidence="12">
    <location>
        <position position="191"/>
    </location>
</feature>
<feature type="cross-link" description="Glycyl lysine isopeptide (Lys-Gly) (interchain with G-Cter in SUMO2)" evidence="12">
    <location>
        <position position="198"/>
    </location>
</feature>
<feature type="cross-link" description="Glycyl lysine isopeptide (Lys-Gly) (interchain with G-Cter in SUMO2)" evidence="12">
    <location>
        <position position="226"/>
    </location>
</feature>
<feature type="cross-link" description="Glycyl lysine isopeptide (Lys-Gly) (interchain with G-Cter in SUMO2)" evidence="12">
    <location>
        <position position="304"/>
    </location>
</feature>
<feature type="cross-link" description="Glycyl lysine isopeptide (Lys-Gly) (interchain with G-Cter in SUMO2)" evidence="12">
    <location>
        <position position="313"/>
    </location>
</feature>
<feature type="cross-link" description="Glycyl lysine isopeptide (Lys-Gly) (interchain with G-Cter in SUMO2)" evidence="12">
    <location>
        <position position="330"/>
    </location>
</feature>
<feature type="splice variant" id="VSP_056706" description="In isoform 2." evidence="9">
    <location>
        <begin position="1"/>
        <end position="27"/>
    </location>
</feature>
<feature type="splice variant" id="VSP_056705" description="In isoform 4." evidence="8">
    <original>MRACAGSTREAGSG</original>
    <variation>MRRVYAGSWKRCA</variation>
    <location>
        <begin position="1"/>
        <end position="14"/>
    </location>
</feature>
<feature type="splice variant" id="VSP_056707" description="In isoform 3." evidence="7">
    <original>VCAQDSFLPQEIIIKVEGEDTGSLTIPSQ</original>
    <variation>VCAQ</variation>
    <location>
        <begin position="41"/>
        <end position="69"/>
    </location>
</feature>
<feature type="sequence variant" id="VAR_030864" description="In dbSNP:rs2571108." evidence="3 4 5 6">
    <original>V</original>
    <variation>A</variation>
    <location>
        <position position="41"/>
    </location>
</feature>
<feature type="sequence variant" id="VAR_030865" description="In dbSNP:rs2253563." evidence="3 4 5 6">
    <original>C</original>
    <variation>W</variation>
    <location>
        <position position="89"/>
    </location>
</feature>
<feature type="sequence variant" id="VAR_030866" description="In dbSNP:rs1897820." evidence="3 4 5 6">
    <original>S</original>
    <variation>C</variation>
    <location>
        <position position="272"/>
    </location>
</feature>
<feature type="sequence conflict" description="In Ref. 2; BAG53668." evidence="9" ref="2">
    <original>F</original>
    <variation>L</variation>
    <location>
        <position position="558"/>
    </location>
</feature>
<proteinExistence type="evidence at protein level"/>
<sequence length="692" mass="79040">MRACAGSTREAGSGAQDLSTLLCLEESMEEQDEKPPEPPKVCAQDSFLPQEIIIKVEGEDTGSLTIPSQEGVNFKIVTVDFTREEQGTCNPAQRTLDRDVILENHRDLVSWDLATAVGKKDSTSKQRIFDEEPANGVKIERFTRDDPWLSSCEEVDDCKDQLEKQQEKQEILLQEVAFTQRKAVIHERVCKSDETGEKSGLNSSLFSSPVIPIRNHFHKHVSHAKKWHLNAAVNSHQKINENETLYENNECGKPPQSIHLIQFTRTQTKDKSYGFSDRIQSFCHGTPLHIHEKIHGGGKTFDFKECGQVLNPKISHNEQQRIPFEESQYKCSETSHSSSLTQNMRNNSEEKPFECNQCGKSFSWSSHLVAHQRTHTGEKPYECSECGKSFSRSSHLVSHQRTHTGEKPYRCNQCGKSFSQSYVLVVHQRTHTGEKPYECNQCGKSFRQSYKLIAHQRTHTGEKPYECNQCGKSFIQSYKLIAHQRIHTGEKPYECNQCGKSFSQSYKLVAHQRTHTGEKPFECNQCGKSFSWSSQLVAHQRTHTGEKPYECSECGKSFNRSSHLVMHQRIHTGEKPYECNQCGKSFSQSYVLVVHQRTHTGEKPYECSQCGKSFRQSSCLTQHQRTHTGEKPFECNQCGKTFSLSARLIVHQRTHTGEKPFTCIQCGKAFINSYKLIRHQATHTEEKLYECN</sequence>